<gene>
    <name evidence="1" type="primary">rpsZ</name>
    <name evidence="1" type="synonym">rpsN</name>
    <name type="ordered locus">SpyM50057</name>
</gene>
<feature type="chain" id="PRO_1000067966" description="Small ribosomal subunit protein uS14B">
    <location>
        <begin position="1"/>
        <end position="61"/>
    </location>
</feature>
<feature type="binding site" evidence="1">
    <location>
        <position position="24"/>
    </location>
    <ligand>
        <name>Zn(2+)</name>
        <dbReference type="ChEBI" id="CHEBI:29105"/>
    </ligand>
</feature>
<feature type="binding site" evidence="1">
    <location>
        <position position="27"/>
    </location>
    <ligand>
        <name>Zn(2+)</name>
        <dbReference type="ChEBI" id="CHEBI:29105"/>
    </ligand>
</feature>
<feature type="binding site" evidence="1">
    <location>
        <position position="40"/>
    </location>
    <ligand>
        <name>Zn(2+)</name>
        <dbReference type="ChEBI" id="CHEBI:29105"/>
    </ligand>
</feature>
<feature type="binding site" evidence="1">
    <location>
        <position position="43"/>
    </location>
    <ligand>
        <name>Zn(2+)</name>
        <dbReference type="ChEBI" id="CHEBI:29105"/>
    </ligand>
</feature>
<keyword id="KW-0479">Metal-binding</keyword>
<keyword id="KW-0687">Ribonucleoprotein</keyword>
<keyword id="KW-0689">Ribosomal protein</keyword>
<keyword id="KW-0694">RNA-binding</keyword>
<keyword id="KW-0699">rRNA-binding</keyword>
<keyword id="KW-0862">Zinc</keyword>
<sequence>MAKKSMIAKNKRPAKHSTQAYTRCEKCGRPHSVYRKFKLCRVCFRELAYKGQIPGVVKASW</sequence>
<comment type="function">
    <text evidence="1">Binds 16S rRNA, required for the assembly of 30S particles and may also be responsible for determining the conformation of the 16S rRNA at the A site.</text>
</comment>
<comment type="cofactor">
    <cofactor evidence="1">
        <name>Zn(2+)</name>
        <dbReference type="ChEBI" id="CHEBI:29105"/>
    </cofactor>
    <text evidence="1">Binds 1 zinc ion per subunit.</text>
</comment>
<comment type="subunit">
    <text evidence="1">Part of the 30S ribosomal subunit. Contacts proteins S3 and S10.</text>
</comment>
<comment type="similarity">
    <text evidence="1">Belongs to the universal ribosomal protein uS14 family. Zinc-binding uS14 subfamily.</text>
</comment>
<proteinExistence type="inferred from homology"/>
<evidence type="ECO:0000255" key="1">
    <source>
        <dbReference type="HAMAP-Rule" id="MF_01364"/>
    </source>
</evidence>
<evidence type="ECO:0000305" key="2"/>
<organism>
    <name type="scientific">Streptococcus pyogenes serotype M5 (strain Manfredo)</name>
    <dbReference type="NCBI Taxonomy" id="160491"/>
    <lineage>
        <taxon>Bacteria</taxon>
        <taxon>Bacillati</taxon>
        <taxon>Bacillota</taxon>
        <taxon>Bacilli</taxon>
        <taxon>Lactobacillales</taxon>
        <taxon>Streptococcaceae</taxon>
        <taxon>Streptococcus</taxon>
    </lineage>
</organism>
<reference key="1">
    <citation type="journal article" date="2007" name="J. Bacteriol.">
        <title>Complete genome of acute rheumatic fever-associated serotype M5 Streptococcus pyogenes strain Manfredo.</title>
        <authorList>
            <person name="Holden M.T.G."/>
            <person name="Scott A."/>
            <person name="Cherevach I."/>
            <person name="Chillingworth T."/>
            <person name="Churcher C."/>
            <person name="Cronin A."/>
            <person name="Dowd L."/>
            <person name="Feltwell T."/>
            <person name="Hamlin N."/>
            <person name="Holroyd S."/>
            <person name="Jagels K."/>
            <person name="Moule S."/>
            <person name="Mungall K."/>
            <person name="Quail M.A."/>
            <person name="Price C."/>
            <person name="Rabbinowitsch E."/>
            <person name="Sharp S."/>
            <person name="Skelton J."/>
            <person name="Whitehead S."/>
            <person name="Barrell B.G."/>
            <person name="Kehoe M."/>
            <person name="Parkhill J."/>
        </authorList>
    </citation>
    <scope>NUCLEOTIDE SEQUENCE [LARGE SCALE GENOMIC DNA]</scope>
    <source>
        <strain>Manfredo</strain>
    </source>
</reference>
<accession>A2RC27</accession>
<dbReference type="EMBL" id="AM295007">
    <property type="protein sequence ID" value="CAM29399.1"/>
    <property type="molecule type" value="Genomic_DNA"/>
</dbReference>
<dbReference type="RefSeq" id="WP_002987746.1">
    <property type="nucleotide sequence ID" value="NC_009332.1"/>
</dbReference>
<dbReference type="SMR" id="A2RC27"/>
<dbReference type="KEGG" id="spf:SpyM50057"/>
<dbReference type="HOGENOM" id="CLU_139869_3_0_9"/>
<dbReference type="GO" id="GO:0015935">
    <property type="term" value="C:small ribosomal subunit"/>
    <property type="evidence" value="ECO:0007669"/>
    <property type="project" value="TreeGrafter"/>
</dbReference>
<dbReference type="GO" id="GO:0019843">
    <property type="term" value="F:rRNA binding"/>
    <property type="evidence" value="ECO:0007669"/>
    <property type="project" value="UniProtKB-UniRule"/>
</dbReference>
<dbReference type="GO" id="GO:0003735">
    <property type="term" value="F:structural constituent of ribosome"/>
    <property type="evidence" value="ECO:0007669"/>
    <property type="project" value="InterPro"/>
</dbReference>
<dbReference type="GO" id="GO:0008270">
    <property type="term" value="F:zinc ion binding"/>
    <property type="evidence" value="ECO:0007669"/>
    <property type="project" value="UniProtKB-UniRule"/>
</dbReference>
<dbReference type="GO" id="GO:0006412">
    <property type="term" value="P:translation"/>
    <property type="evidence" value="ECO:0007669"/>
    <property type="project" value="UniProtKB-UniRule"/>
</dbReference>
<dbReference type="FunFam" id="4.10.830.10:FF:000001">
    <property type="entry name" value="30S ribosomal protein S14 type Z"/>
    <property type="match status" value="1"/>
</dbReference>
<dbReference type="Gene3D" id="4.10.830.10">
    <property type="entry name" value="30s Ribosomal Protein S14, Chain N"/>
    <property type="match status" value="1"/>
</dbReference>
<dbReference type="HAMAP" id="MF_01364_B">
    <property type="entry name" value="Ribosomal_uS14_2_B"/>
    <property type="match status" value="1"/>
</dbReference>
<dbReference type="InterPro" id="IPR001209">
    <property type="entry name" value="Ribosomal_uS14"/>
</dbReference>
<dbReference type="InterPro" id="IPR023053">
    <property type="entry name" value="Ribosomal_uS14_bact"/>
</dbReference>
<dbReference type="InterPro" id="IPR018271">
    <property type="entry name" value="Ribosomal_uS14_CS"/>
</dbReference>
<dbReference type="InterPro" id="IPR043140">
    <property type="entry name" value="Ribosomal_uS14_sf"/>
</dbReference>
<dbReference type="NCBIfam" id="NF005974">
    <property type="entry name" value="PRK08061.1"/>
    <property type="match status" value="1"/>
</dbReference>
<dbReference type="PANTHER" id="PTHR19836">
    <property type="entry name" value="30S RIBOSOMAL PROTEIN S14"/>
    <property type="match status" value="1"/>
</dbReference>
<dbReference type="PANTHER" id="PTHR19836:SF26">
    <property type="entry name" value="SMALL RIBOSOMAL SUBUNIT PROTEIN US14B"/>
    <property type="match status" value="1"/>
</dbReference>
<dbReference type="Pfam" id="PF00253">
    <property type="entry name" value="Ribosomal_S14"/>
    <property type="match status" value="1"/>
</dbReference>
<dbReference type="SUPFAM" id="SSF57716">
    <property type="entry name" value="Glucocorticoid receptor-like (DNA-binding domain)"/>
    <property type="match status" value="1"/>
</dbReference>
<dbReference type="PROSITE" id="PS00527">
    <property type="entry name" value="RIBOSOMAL_S14"/>
    <property type="match status" value="1"/>
</dbReference>
<protein>
    <recommendedName>
        <fullName evidence="1">Small ribosomal subunit protein uS14B</fullName>
    </recommendedName>
    <alternativeName>
        <fullName evidence="2">30S ribosomal protein S14 type Z</fullName>
    </alternativeName>
</protein>
<name>RS14Z_STRPG</name>